<name>RL18_COXBU</name>
<comment type="function">
    <text evidence="1">This is one of the proteins that bind and probably mediate the attachment of the 5S RNA into the large ribosomal subunit, where it forms part of the central protuberance.</text>
</comment>
<comment type="subunit">
    <text evidence="1">Part of the 50S ribosomal subunit; part of the 5S rRNA/L5/L18/L25 subcomplex. Contacts the 5S and 23S rRNAs.</text>
</comment>
<comment type="similarity">
    <text evidence="1">Belongs to the universal ribosomal protein uL18 family.</text>
</comment>
<keyword id="KW-1185">Reference proteome</keyword>
<keyword id="KW-0687">Ribonucleoprotein</keyword>
<keyword id="KW-0689">Ribosomal protein</keyword>
<keyword id="KW-0694">RNA-binding</keyword>
<keyword id="KW-0699">rRNA-binding</keyword>
<protein>
    <recommendedName>
        <fullName evidence="1">Large ribosomal subunit protein uL18</fullName>
    </recommendedName>
    <alternativeName>
        <fullName evidence="2">50S ribosomal protein L18</fullName>
    </alternativeName>
</protein>
<dbReference type="EMBL" id="AE016828">
    <property type="protein sequence ID" value="AAO89812.1"/>
    <property type="molecule type" value="Genomic_DNA"/>
</dbReference>
<dbReference type="RefSeq" id="NP_819298.1">
    <property type="nucleotide sequence ID" value="NC_002971.4"/>
</dbReference>
<dbReference type="RefSeq" id="WP_005771517.1">
    <property type="nucleotide sequence ID" value="NZ_CCYB01000060.1"/>
</dbReference>
<dbReference type="SMR" id="Q83ER0"/>
<dbReference type="STRING" id="227377.CBU_0254"/>
<dbReference type="DNASU" id="1208135"/>
<dbReference type="EnsemblBacteria" id="AAO89812">
    <property type="protein sequence ID" value="AAO89812"/>
    <property type="gene ID" value="CBU_0254"/>
</dbReference>
<dbReference type="GeneID" id="1208135"/>
<dbReference type="KEGG" id="cbu:CBU_0254"/>
<dbReference type="PATRIC" id="fig|227377.7.peg.249"/>
<dbReference type="eggNOG" id="COG0256">
    <property type="taxonomic scope" value="Bacteria"/>
</dbReference>
<dbReference type="HOGENOM" id="CLU_098841_0_1_6"/>
<dbReference type="OrthoDB" id="9810939at2"/>
<dbReference type="Proteomes" id="UP000002671">
    <property type="component" value="Chromosome"/>
</dbReference>
<dbReference type="GO" id="GO:0022625">
    <property type="term" value="C:cytosolic large ribosomal subunit"/>
    <property type="evidence" value="ECO:0000318"/>
    <property type="project" value="GO_Central"/>
</dbReference>
<dbReference type="GO" id="GO:0008097">
    <property type="term" value="F:5S rRNA binding"/>
    <property type="evidence" value="ECO:0000318"/>
    <property type="project" value="GO_Central"/>
</dbReference>
<dbReference type="GO" id="GO:0003735">
    <property type="term" value="F:structural constituent of ribosome"/>
    <property type="evidence" value="ECO:0007669"/>
    <property type="project" value="InterPro"/>
</dbReference>
<dbReference type="GO" id="GO:0006412">
    <property type="term" value="P:translation"/>
    <property type="evidence" value="ECO:0007669"/>
    <property type="project" value="UniProtKB-UniRule"/>
</dbReference>
<dbReference type="CDD" id="cd00432">
    <property type="entry name" value="Ribosomal_L18_L5e"/>
    <property type="match status" value="1"/>
</dbReference>
<dbReference type="FunFam" id="3.30.420.100:FF:000001">
    <property type="entry name" value="50S ribosomal protein L18"/>
    <property type="match status" value="1"/>
</dbReference>
<dbReference type="Gene3D" id="3.30.420.100">
    <property type="match status" value="1"/>
</dbReference>
<dbReference type="HAMAP" id="MF_01337_B">
    <property type="entry name" value="Ribosomal_uL18_B"/>
    <property type="match status" value="1"/>
</dbReference>
<dbReference type="InterPro" id="IPR004389">
    <property type="entry name" value="Ribosomal_uL18_bac-type"/>
</dbReference>
<dbReference type="InterPro" id="IPR005484">
    <property type="entry name" value="Ribosomal_uL18_bac/euk"/>
</dbReference>
<dbReference type="NCBIfam" id="TIGR00060">
    <property type="entry name" value="L18_bact"/>
    <property type="match status" value="1"/>
</dbReference>
<dbReference type="PANTHER" id="PTHR12899">
    <property type="entry name" value="39S RIBOSOMAL PROTEIN L18, MITOCHONDRIAL"/>
    <property type="match status" value="1"/>
</dbReference>
<dbReference type="PANTHER" id="PTHR12899:SF3">
    <property type="entry name" value="LARGE RIBOSOMAL SUBUNIT PROTEIN UL18M"/>
    <property type="match status" value="1"/>
</dbReference>
<dbReference type="Pfam" id="PF00861">
    <property type="entry name" value="Ribosomal_L18p"/>
    <property type="match status" value="1"/>
</dbReference>
<dbReference type="SUPFAM" id="SSF53137">
    <property type="entry name" value="Translational machinery components"/>
    <property type="match status" value="1"/>
</dbReference>
<organism>
    <name type="scientific">Coxiella burnetii (strain RSA 493 / Nine Mile phase I)</name>
    <dbReference type="NCBI Taxonomy" id="227377"/>
    <lineage>
        <taxon>Bacteria</taxon>
        <taxon>Pseudomonadati</taxon>
        <taxon>Pseudomonadota</taxon>
        <taxon>Gammaproteobacteria</taxon>
        <taxon>Legionellales</taxon>
        <taxon>Coxiellaceae</taxon>
        <taxon>Coxiella</taxon>
    </lineage>
</organism>
<proteinExistence type="inferred from homology"/>
<feature type="chain" id="PRO_0000131254" description="Large ribosomal subunit protein uL18">
    <location>
        <begin position="1"/>
        <end position="117"/>
    </location>
</feature>
<reference key="1">
    <citation type="journal article" date="2003" name="Proc. Natl. Acad. Sci. U.S.A.">
        <title>Complete genome sequence of the Q-fever pathogen, Coxiella burnetii.</title>
        <authorList>
            <person name="Seshadri R."/>
            <person name="Paulsen I.T."/>
            <person name="Eisen J.A."/>
            <person name="Read T.D."/>
            <person name="Nelson K.E."/>
            <person name="Nelson W.C."/>
            <person name="Ward N.L."/>
            <person name="Tettelin H."/>
            <person name="Davidsen T.M."/>
            <person name="Beanan M.J."/>
            <person name="DeBoy R.T."/>
            <person name="Daugherty S.C."/>
            <person name="Brinkac L.M."/>
            <person name="Madupu R."/>
            <person name="Dodson R.J."/>
            <person name="Khouri H.M."/>
            <person name="Lee K.H."/>
            <person name="Carty H.A."/>
            <person name="Scanlan D."/>
            <person name="Heinzen R.A."/>
            <person name="Thompson H.A."/>
            <person name="Samuel J.E."/>
            <person name="Fraser C.M."/>
            <person name="Heidelberg J.F."/>
        </authorList>
    </citation>
    <scope>NUCLEOTIDE SEQUENCE [LARGE SCALE GENOMIC DNA]</scope>
    <source>
        <strain>RSA 493 / Nine Mile phase I</strain>
    </source>
</reference>
<sequence length="117" mass="13106">MDKQEKRIRRARRTRAKIKELGAVRLCVHRSLNHIYAQLISPRDSKVLVCASTLEKEVRSQIKHGGNIQAATAIGKLIAQRAKKAGVTKVAFDRSGYKYHGRVRALAEAVREGGIEF</sequence>
<evidence type="ECO:0000255" key="1">
    <source>
        <dbReference type="HAMAP-Rule" id="MF_01337"/>
    </source>
</evidence>
<evidence type="ECO:0000305" key="2"/>
<accession>Q83ER0</accession>
<gene>
    <name evidence="1" type="primary">rplR</name>
    <name type="ordered locus">CBU_0254</name>
</gene>